<proteinExistence type="inferred from homology"/>
<name>PROB_RHOP2</name>
<reference key="1">
    <citation type="submission" date="2006-01" db="EMBL/GenBank/DDBJ databases">
        <title>Complete sequence of Rhodopseudomonas palustris HaA2.</title>
        <authorList>
            <consortium name="US DOE Joint Genome Institute"/>
            <person name="Copeland A."/>
            <person name="Lucas S."/>
            <person name="Lapidus A."/>
            <person name="Barry K."/>
            <person name="Detter J.C."/>
            <person name="Glavina T."/>
            <person name="Hammon N."/>
            <person name="Israni S."/>
            <person name="Pitluck S."/>
            <person name="Chain P."/>
            <person name="Malfatti S."/>
            <person name="Shin M."/>
            <person name="Vergez L."/>
            <person name="Schmutz J."/>
            <person name="Larimer F."/>
            <person name="Land M."/>
            <person name="Hauser L."/>
            <person name="Pelletier D.A."/>
            <person name="Kyrpides N."/>
            <person name="Anderson I."/>
            <person name="Oda Y."/>
            <person name="Harwood C.S."/>
            <person name="Richardson P."/>
        </authorList>
    </citation>
    <scope>NUCLEOTIDE SEQUENCE [LARGE SCALE GENOMIC DNA]</scope>
    <source>
        <strain>HaA2</strain>
    </source>
</reference>
<feature type="chain" id="PRO_0000252997" description="Glutamate 5-kinase">
    <location>
        <begin position="1"/>
        <end position="376"/>
    </location>
</feature>
<feature type="domain" description="PUA" evidence="1">
    <location>
        <begin position="281"/>
        <end position="358"/>
    </location>
</feature>
<feature type="binding site" evidence="1">
    <location>
        <position position="15"/>
    </location>
    <ligand>
        <name>ATP</name>
        <dbReference type="ChEBI" id="CHEBI:30616"/>
    </ligand>
</feature>
<feature type="binding site" evidence="1">
    <location>
        <position position="56"/>
    </location>
    <ligand>
        <name>substrate</name>
    </ligand>
</feature>
<feature type="binding site" evidence="1">
    <location>
        <position position="143"/>
    </location>
    <ligand>
        <name>substrate</name>
    </ligand>
</feature>
<feature type="binding site" evidence="1">
    <location>
        <position position="155"/>
    </location>
    <ligand>
        <name>substrate</name>
    </ligand>
</feature>
<feature type="binding site" evidence="1">
    <location>
        <begin position="175"/>
        <end position="176"/>
    </location>
    <ligand>
        <name>ATP</name>
        <dbReference type="ChEBI" id="CHEBI:30616"/>
    </ligand>
</feature>
<evidence type="ECO:0000255" key="1">
    <source>
        <dbReference type="HAMAP-Rule" id="MF_00456"/>
    </source>
</evidence>
<keyword id="KW-0028">Amino-acid biosynthesis</keyword>
<keyword id="KW-0067">ATP-binding</keyword>
<keyword id="KW-0963">Cytoplasm</keyword>
<keyword id="KW-0418">Kinase</keyword>
<keyword id="KW-0547">Nucleotide-binding</keyword>
<keyword id="KW-0641">Proline biosynthesis</keyword>
<keyword id="KW-1185">Reference proteome</keyword>
<keyword id="KW-0808">Transferase</keyword>
<protein>
    <recommendedName>
        <fullName evidence="1">Glutamate 5-kinase</fullName>
        <ecNumber evidence="1">2.7.2.11</ecNumber>
    </recommendedName>
    <alternativeName>
        <fullName evidence="1">Gamma-glutamyl kinase</fullName>
        <shortName evidence="1">GK</shortName>
    </alternativeName>
</protein>
<organism>
    <name type="scientific">Rhodopseudomonas palustris (strain HaA2)</name>
    <dbReference type="NCBI Taxonomy" id="316058"/>
    <lineage>
        <taxon>Bacteria</taxon>
        <taxon>Pseudomonadati</taxon>
        <taxon>Pseudomonadota</taxon>
        <taxon>Alphaproteobacteria</taxon>
        <taxon>Hyphomicrobiales</taxon>
        <taxon>Nitrobacteraceae</taxon>
        <taxon>Rhodopseudomonas</taxon>
    </lineage>
</organism>
<dbReference type="EC" id="2.7.2.11" evidence="1"/>
<dbReference type="EMBL" id="CP000250">
    <property type="protein sequence ID" value="ABD04963.1"/>
    <property type="molecule type" value="Genomic_DNA"/>
</dbReference>
<dbReference type="RefSeq" id="WP_011439153.1">
    <property type="nucleotide sequence ID" value="NC_007778.1"/>
</dbReference>
<dbReference type="SMR" id="Q2J3J7"/>
<dbReference type="STRING" id="316058.RPB_0252"/>
<dbReference type="KEGG" id="rpb:RPB_0252"/>
<dbReference type="eggNOG" id="COG0263">
    <property type="taxonomic scope" value="Bacteria"/>
</dbReference>
<dbReference type="HOGENOM" id="CLU_025400_2_0_5"/>
<dbReference type="OrthoDB" id="9804434at2"/>
<dbReference type="UniPathway" id="UPA00098">
    <property type="reaction ID" value="UER00359"/>
</dbReference>
<dbReference type="Proteomes" id="UP000008809">
    <property type="component" value="Chromosome"/>
</dbReference>
<dbReference type="GO" id="GO:0005829">
    <property type="term" value="C:cytosol"/>
    <property type="evidence" value="ECO:0007669"/>
    <property type="project" value="TreeGrafter"/>
</dbReference>
<dbReference type="GO" id="GO:0005524">
    <property type="term" value="F:ATP binding"/>
    <property type="evidence" value="ECO:0007669"/>
    <property type="project" value="UniProtKB-KW"/>
</dbReference>
<dbReference type="GO" id="GO:0004349">
    <property type="term" value="F:glutamate 5-kinase activity"/>
    <property type="evidence" value="ECO:0007669"/>
    <property type="project" value="UniProtKB-UniRule"/>
</dbReference>
<dbReference type="GO" id="GO:0003723">
    <property type="term" value="F:RNA binding"/>
    <property type="evidence" value="ECO:0007669"/>
    <property type="project" value="InterPro"/>
</dbReference>
<dbReference type="GO" id="GO:0055129">
    <property type="term" value="P:L-proline biosynthetic process"/>
    <property type="evidence" value="ECO:0007669"/>
    <property type="project" value="UniProtKB-UniRule"/>
</dbReference>
<dbReference type="CDD" id="cd04242">
    <property type="entry name" value="AAK_G5K_ProB"/>
    <property type="match status" value="1"/>
</dbReference>
<dbReference type="CDD" id="cd21157">
    <property type="entry name" value="PUA_G5K"/>
    <property type="match status" value="1"/>
</dbReference>
<dbReference type="FunFam" id="2.30.130.10:FF:000007">
    <property type="entry name" value="Glutamate 5-kinase"/>
    <property type="match status" value="1"/>
</dbReference>
<dbReference type="FunFam" id="3.40.1160.10:FF:000018">
    <property type="entry name" value="Glutamate 5-kinase"/>
    <property type="match status" value="1"/>
</dbReference>
<dbReference type="Gene3D" id="3.40.1160.10">
    <property type="entry name" value="Acetylglutamate kinase-like"/>
    <property type="match status" value="1"/>
</dbReference>
<dbReference type="Gene3D" id="2.30.130.10">
    <property type="entry name" value="PUA domain"/>
    <property type="match status" value="1"/>
</dbReference>
<dbReference type="HAMAP" id="MF_00456">
    <property type="entry name" value="ProB"/>
    <property type="match status" value="1"/>
</dbReference>
<dbReference type="InterPro" id="IPR036393">
    <property type="entry name" value="AceGlu_kinase-like_sf"/>
</dbReference>
<dbReference type="InterPro" id="IPR001048">
    <property type="entry name" value="Asp/Glu/Uridylate_kinase"/>
</dbReference>
<dbReference type="InterPro" id="IPR041739">
    <property type="entry name" value="G5K_ProB"/>
</dbReference>
<dbReference type="InterPro" id="IPR001057">
    <property type="entry name" value="Glu/AcGlu_kinase"/>
</dbReference>
<dbReference type="InterPro" id="IPR011529">
    <property type="entry name" value="Glu_5kinase"/>
</dbReference>
<dbReference type="InterPro" id="IPR005715">
    <property type="entry name" value="Glu_5kinase/COase_Synthase"/>
</dbReference>
<dbReference type="InterPro" id="IPR019797">
    <property type="entry name" value="Glutamate_5-kinase_CS"/>
</dbReference>
<dbReference type="InterPro" id="IPR002478">
    <property type="entry name" value="PUA"/>
</dbReference>
<dbReference type="InterPro" id="IPR015947">
    <property type="entry name" value="PUA-like_sf"/>
</dbReference>
<dbReference type="InterPro" id="IPR036974">
    <property type="entry name" value="PUA_sf"/>
</dbReference>
<dbReference type="NCBIfam" id="TIGR01027">
    <property type="entry name" value="proB"/>
    <property type="match status" value="1"/>
</dbReference>
<dbReference type="PANTHER" id="PTHR43654">
    <property type="entry name" value="GLUTAMATE 5-KINASE"/>
    <property type="match status" value="1"/>
</dbReference>
<dbReference type="PANTHER" id="PTHR43654:SF1">
    <property type="entry name" value="ISOPENTENYL PHOSPHATE KINASE"/>
    <property type="match status" value="1"/>
</dbReference>
<dbReference type="Pfam" id="PF00696">
    <property type="entry name" value="AA_kinase"/>
    <property type="match status" value="1"/>
</dbReference>
<dbReference type="Pfam" id="PF01472">
    <property type="entry name" value="PUA"/>
    <property type="match status" value="1"/>
</dbReference>
<dbReference type="PIRSF" id="PIRSF000729">
    <property type="entry name" value="GK"/>
    <property type="match status" value="1"/>
</dbReference>
<dbReference type="PRINTS" id="PR00474">
    <property type="entry name" value="GLU5KINASE"/>
</dbReference>
<dbReference type="SMART" id="SM00359">
    <property type="entry name" value="PUA"/>
    <property type="match status" value="1"/>
</dbReference>
<dbReference type="SUPFAM" id="SSF53633">
    <property type="entry name" value="Carbamate kinase-like"/>
    <property type="match status" value="1"/>
</dbReference>
<dbReference type="SUPFAM" id="SSF88697">
    <property type="entry name" value="PUA domain-like"/>
    <property type="match status" value="1"/>
</dbReference>
<dbReference type="PROSITE" id="PS00902">
    <property type="entry name" value="GLUTAMATE_5_KINASE"/>
    <property type="match status" value="1"/>
</dbReference>
<dbReference type="PROSITE" id="PS50890">
    <property type="entry name" value="PUA"/>
    <property type="match status" value="1"/>
</dbReference>
<sequence>MARPKLHDFRRIVVKVGSSLLIDSGAGEVRATWLAALAADIAELHRDGRDVMIVSSGSIALGRSRLKLPRGALKLEESQAAAAVGQIALARTWSEVLGHHGIGAGQILVTLQDTEERRRYLNARSTIAKLLEWRAVPVINENDTVATNEIRYGDNDRLAARVATMASADLLILLSDIDGLYTAPPGSNPDAKLIPVVDSVTAEIEGMAGAAGSELSRGGMRTKIEAAKIATSAGTHMLIASGKIDHPLKAIAGGGPCTWFLTPANPVTARKRWIAGSLEPKGTLTIDAGAVTALRAGKSLLPAGVIRVDGQFARGDAVIVRGPDTHEIGRGLVAYDADDADRIKGRSSPDVMSILGVSGRAEMIHRDDLVVGTAPG</sequence>
<gene>
    <name evidence="1" type="primary">proB</name>
    <name type="ordered locus">RPB_0252</name>
</gene>
<accession>Q2J3J7</accession>
<comment type="function">
    <text evidence="1">Catalyzes the transfer of a phosphate group to glutamate to form L-glutamate 5-phosphate.</text>
</comment>
<comment type="catalytic activity">
    <reaction evidence="1">
        <text>L-glutamate + ATP = L-glutamyl 5-phosphate + ADP</text>
        <dbReference type="Rhea" id="RHEA:14877"/>
        <dbReference type="ChEBI" id="CHEBI:29985"/>
        <dbReference type="ChEBI" id="CHEBI:30616"/>
        <dbReference type="ChEBI" id="CHEBI:58274"/>
        <dbReference type="ChEBI" id="CHEBI:456216"/>
        <dbReference type="EC" id="2.7.2.11"/>
    </reaction>
</comment>
<comment type="pathway">
    <text evidence="1">Amino-acid biosynthesis; L-proline biosynthesis; L-glutamate 5-semialdehyde from L-glutamate: step 1/2.</text>
</comment>
<comment type="subcellular location">
    <subcellularLocation>
        <location evidence="1">Cytoplasm</location>
    </subcellularLocation>
</comment>
<comment type="similarity">
    <text evidence="1">Belongs to the glutamate 5-kinase family.</text>
</comment>